<proteinExistence type="inferred from homology"/>
<sequence>MITLHMVVLPFLITLFLLLIIKFLPMNVPDKEKLSPYECGFDPSGSARLPFSMKFFLVAILFILFDLEIILLFPLAWALNSQSHSNAIILASVFVIILTLGLIYEWLKGGLEWTE</sequence>
<gene>
    <name type="primary">MT-ND3</name>
    <name type="synonym">MTND3</name>
    <name type="synonym">NADH3</name>
    <name type="synonym">ND3</name>
</gene>
<organism>
    <name type="scientific">Myxine glutinosa</name>
    <name type="common">Atlantic hagfish</name>
    <dbReference type="NCBI Taxonomy" id="7769"/>
    <lineage>
        <taxon>Eukaryota</taxon>
        <taxon>Metazoa</taxon>
        <taxon>Chordata</taxon>
        <taxon>Craniata</taxon>
        <taxon>Vertebrata</taxon>
        <taxon>Cyclostomata</taxon>
        <taxon>Myxini</taxon>
        <taxon>Myxiniformes</taxon>
        <taxon>Myxinidae</taxon>
        <taxon>Myxininae</taxon>
        <taxon>Myxine</taxon>
    </lineage>
</organism>
<keyword id="KW-0249">Electron transport</keyword>
<keyword id="KW-0472">Membrane</keyword>
<keyword id="KW-0496">Mitochondrion</keyword>
<keyword id="KW-0520">NAD</keyword>
<keyword id="KW-0679">Respiratory chain</keyword>
<keyword id="KW-1278">Translocase</keyword>
<keyword id="KW-0812">Transmembrane</keyword>
<keyword id="KW-1133">Transmembrane helix</keyword>
<keyword id="KW-0813">Transport</keyword>
<keyword id="KW-0830">Ubiquinone</keyword>
<name>NU3M_MYXGL</name>
<accession>Q9G2X1</accession>
<accession>O63919</accession>
<evidence type="ECO:0000250" key="1"/>
<evidence type="ECO:0000255" key="2"/>
<evidence type="ECO:0000305" key="3"/>
<reference key="1">
    <citation type="journal article" date="1998" name="J. Mol. Evol.">
        <title>The mitochondrial DNA molecule of the hagfish (Myxine glutinosa) and vertebrate phylogeny.</title>
        <authorList>
            <person name="Rasmussen A.S."/>
            <person name="Janke A."/>
            <person name="Arnason U."/>
        </authorList>
    </citation>
    <scope>NUCLEOTIDE SEQUENCE [GENOMIC DNA]</scope>
</reference>
<reference key="2">
    <citation type="journal article" date="2001" name="J. Mol. Evol.">
        <title>The complete mitochondrial genome of the hagfish Myxine glutinosa: unique features of the control region.</title>
        <authorList>
            <person name="Delarbre C."/>
            <person name="Rasmussen A.S."/>
            <person name="Arnason U."/>
            <person name="Gachelin G."/>
        </authorList>
    </citation>
    <scope>NUCLEOTIDE SEQUENCE [GENOMIC DNA]</scope>
</reference>
<dbReference type="EC" id="7.1.1.2"/>
<dbReference type="EMBL" id="Y15188">
    <property type="protein sequence ID" value="CAA75487.2"/>
    <property type="molecule type" value="Genomic_DNA"/>
</dbReference>
<dbReference type="EMBL" id="AJ404477">
    <property type="protein sequence ID" value="CAC20656.1"/>
    <property type="molecule type" value="Genomic_DNA"/>
</dbReference>
<dbReference type="RefSeq" id="NP_073280.1">
    <property type="nucleotide sequence ID" value="NC_002639.1"/>
</dbReference>
<dbReference type="SMR" id="Q9G2X1"/>
<dbReference type="GeneID" id="802352"/>
<dbReference type="CTD" id="4537"/>
<dbReference type="GO" id="GO:0031966">
    <property type="term" value="C:mitochondrial membrane"/>
    <property type="evidence" value="ECO:0007669"/>
    <property type="project" value="UniProtKB-SubCell"/>
</dbReference>
<dbReference type="GO" id="GO:0030964">
    <property type="term" value="C:NADH dehydrogenase complex"/>
    <property type="evidence" value="ECO:0007669"/>
    <property type="project" value="TreeGrafter"/>
</dbReference>
<dbReference type="GO" id="GO:0008137">
    <property type="term" value="F:NADH dehydrogenase (ubiquinone) activity"/>
    <property type="evidence" value="ECO:0007669"/>
    <property type="project" value="UniProtKB-EC"/>
</dbReference>
<dbReference type="FunFam" id="1.20.58.1610:FF:000004">
    <property type="entry name" value="NADH-quinone oxidoreductase subunit A"/>
    <property type="match status" value="1"/>
</dbReference>
<dbReference type="Gene3D" id="1.20.58.1610">
    <property type="entry name" value="NADH:ubiquinone/plastoquinone oxidoreductase, chain 3"/>
    <property type="match status" value="1"/>
</dbReference>
<dbReference type="InterPro" id="IPR000440">
    <property type="entry name" value="NADH_UbQ/plastoQ_OxRdtase_su3"/>
</dbReference>
<dbReference type="InterPro" id="IPR038430">
    <property type="entry name" value="NDAH_ubi_oxred_su3_sf"/>
</dbReference>
<dbReference type="PANTHER" id="PTHR11058">
    <property type="entry name" value="NADH-UBIQUINONE OXIDOREDUCTASE CHAIN 3"/>
    <property type="match status" value="1"/>
</dbReference>
<dbReference type="PANTHER" id="PTHR11058:SF9">
    <property type="entry name" value="NADH-UBIQUINONE OXIDOREDUCTASE CHAIN 3"/>
    <property type="match status" value="1"/>
</dbReference>
<dbReference type="Pfam" id="PF00507">
    <property type="entry name" value="Oxidored_q4"/>
    <property type="match status" value="1"/>
</dbReference>
<protein>
    <recommendedName>
        <fullName>NADH-ubiquinone oxidoreductase chain 3</fullName>
        <ecNumber>7.1.1.2</ecNumber>
    </recommendedName>
    <alternativeName>
        <fullName>NADH dehydrogenase subunit 3</fullName>
    </alternativeName>
</protein>
<geneLocation type="mitochondrion"/>
<feature type="chain" id="PRO_0000117767" description="NADH-ubiquinone oxidoreductase chain 3">
    <location>
        <begin position="1"/>
        <end position="115"/>
    </location>
</feature>
<feature type="transmembrane region" description="Helical" evidence="2">
    <location>
        <begin position="1"/>
        <end position="21"/>
    </location>
</feature>
<feature type="transmembrane region" description="Helical" evidence="2">
    <location>
        <begin position="55"/>
        <end position="75"/>
    </location>
</feature>
<feature type="transmembrane region" description="Helical" evidence="2">
    <location>
        <begin position="87"/>
        <end position="107"/>
    </location>
</feature>
<feature type="sequence conflict" description="In Ref. 1; CAA75487." evidence="3" ref="1">
    <original>V</original>
    <variation>I</variation>
    <location>
        <position position="28"/>
    </location>
</feature>
<feature type="sequence conflict" description="In Ref. 1; CAA75487." evidence="3" ref="1">
    <original>S</original>
    <variation>A</variation>
    <location>
        <position position="83"/>
    </location>
</feature>
<feature type="sequence conflict" description="In Ref. 1; CAA75487." evidence="3" ref="1">
    <original>A</original>
    <variation>S</variation>
    <location>
        <position position="87"/>
    </location>
</feature>
<comment type="function">
    <text evidence="1">Core subunit of the mitochondrial membrane respiratory chain NADH dehydrogenase (Complex I) that is believed to belong to the minimal assembly required for catalysis. Complex I functions in the transfer of electrons from NADH to the respiratory chain. The immediate electron acceptor for the enzyme is believed to be ubiquinone (By similarity).</text>
</comment>
<comment type="catalytic activity">
    <reaction>
        <text>a ubiquinone + NADH + 5 H(+)(in) = a ubiquinol + NAD(+) + 4 H(+)(out)</text>
        <dbReference type="Rhea" id="RHEA:29091"/>
        <dbReference type="Rhea" id="RHEA-COMP:9565"/>
        <dbReference type="Rhea" id="RHEA-COMP:9566"/>
        <dbReference type="ChEBI" id="CHEBI:15378"/>
        <dbReference type="ChEBI" id="CHEBI:16389"/>
        <dbReference type="ChEBI" id="CHEBI:17976"/>
        <dbReference type="ChEBI" id="CHEBI:57540"/>
        <dbReference type="ChEBI" id="CHEBI:57945"/>
        <dbReference type="EC" id="7.1.1.2"/>
    </reaction>
</comment>
<comment type="subcellular location">
    <subcellularLocation>
        <location evidence="1">Mitochondrion membrane</location>
        <topology evidence="1">Multi-pass membrane protein</topology>
    </subcellularLocation>
</comment>
<comment type="similarity">
    <text evidence="3">Belongs to the complex I subunit 3 family.</text>
</comment>